<gene>
    <name evidence="1" type="primary">PFP-BETA</name>
    <name type="ORF">PGSC0003DMG400016726</name>
</gene>
<comment type="function">
    <text evidence="1">Catalytic subunit of pyrophosphate--fructose 6-phosphate 1-phosphotransferase. Catalyzes the phosphorylation of D-fructose 6-phosphate, the first committing step of glycolysis. Uses inorganic phosphate (PPi) as phosphoryl donor instead of ATP like common ATP-dependent phosphofructokinases (ATP-PFKs), which renders the reaction reversible, and can thus function both in glycolysis and gluconeogenesis.</text>
</comment>
<comment type="catalytic activity">
    <reaction evidence="1">
        <text>beta-D-fructose 6-phosphate + diphosphate = beta-D-fructose 1,6-bisphosphate + phosphate + H(+)</text>
        <dbReference type="Rhea" id="RHEA:13613"/>
        <dbReference type="ChEBI" id="CHEBI:15378"/>
        <dbReference type="ChEBI" id="CHEBI:32966"/>
        <dbReference type="ChEBI" id="CHEBI:33019"/>
        <dbReference type="ChEBI" id="CHEBI:43474"/>
        <dbReference type="ChEBI" id="CHEBI:57634"/>
        <dbReference type="EC" id="2.7.1.90"/>
    </reaction>
</comment>
<comment type="cofactor">
    <cofactor evidence="1">
        <name>Mg(2+)</name>
        <dbReference type="ChEBI" id="CHEBI:18420"/>
    </cofactor>
</comment>
<comment type="activity regulation">
    <text evidence="1">Allosterically activated by fructose 2,6-bisphosphate.</text>
</comment>
<comment type="pathway">
    <text evidence="1">Carbohydrate degradation; glycolysis; D-glyceraldehyde 3-phosphate and glycerone phosphate from D-glucose: step 3/4.</text>
</comment>
<comment type="subunit">
    <text evidence="1">Tetramer of two alpha (regulatory) and two beta (catalytic) chains.</text>
</comment>
<comment type="subcellular location">
    <subcellularLocation>
        <location evidence="1">Cytoplasm</location>
    </subcellularLocation>
</comment>
<comment type="similarity">
    <text evidence="1">Belongs to the phosphofructokinase type A (PFKA) family. PPi-dependent PFK group II subfamily. Clade 'Long' sub-subfamily.</text>
</comment>
<comment type="sequence caution" evidence="2">
    <conflict type="frameshift">
        <sequence resource="EMBL-CDS" id="AAA63452"/>
    </conflict>
</comment>
<proteinExistence type="evidence at protein level"/>
<accession>P21343</accession>
<accession>M1BE40</accession>
<feature type="chain" id="PRO_0000112050" description="Pyrophosphate--fructose 6-phosphate 1-phosphotransferase subunit beta">
    <location>
        <begin position="1"/>
        <end position="569"/>
    </location>
</feature>
<feature type="active site" description="Proton acceptor" evidence="1">
    <location>
        <position position="231"/>
    </location>
</feature>
<feature type="binding site" evidence="1">
    <location>
        <position position="107"/>
    </location>
    <ligand>
        <name>diphosphate</name>
        <dbReference type="ChEBI" id="CHEBI:33019"/>
    </ligand>
</feature>
<feature type="binding site" evidence="1">
    <location>
        <position position="201"/>
    </location>
    <ligand>
        <name>Mg(2+)</name>
        <dbReference type="ChEBI" id="CHEBI:18420"/>
        <note>catalytic</note>
    </ligand>
</feature>
<feature type="binding site" description="in other chain" evidence="1">
    <location>
        <begin position="229"/>
        <end position="231"/>
    </location>
    <ligand>
        <name>substrate</name>
        <note>ligand shared between dimeric partners</note>
    </ligand>
</feature>
<feature type="binding site" evidence="1">
    <location>
        <begin position="268"/>
        <end position="269"/>
    </location>
    <ligand>
        <name>substrate</name>
        <note>ligand shared between dimeric partners</note>
    </ligand>
</feature>
<feature type="binding site" description="in other chain" evidence="1">
    <location>
        <begin position="276"/>
        <end position="278"/>
    </location>
    <ligand>
        <name>substrate</name>
        <note>ligand shared between dimeric partners</note>
    </ligand>
</feature>
<feature type="binding site" description="in other chain" evidence="1">
    <location>
        <position position="337"/>
    </location>
    <ligand>
        <name>substrate</name>
        <note>ligand shared between dimeric partners</note>
    </ligand>
</feature>
<feature type="binding site" description="in other chain" evidence="1">
    <location>
        <begin position="442"/>
        <end position="445"/>
    </location>
    <ligand>
        <name>substrate</name>
        <note>ligand shared between dimeric partners</note>
    </ligand>
</feature>
<feature type="site" description="Important for catalytic activity and substrate specificity; stabilizes the transition state when the phosphoryl donor is PPi; prevents ATP from binding by mimicking the alpha-phosphate group of ATP" evidence="1">
    <location>
        <position position="202"/>
    </location>
</feature>
<feature type="site" description="Important for catalytic activity; stabilizes the transition state when the phosphoryl donor is PPi" evidence="1">
    <location>
        <position position="228"/>
    </location>
</feature>
<feature type="sequence conflict" description="In Ref. 1; AAA63452." evidence="2" ref="1">
    <original>S</original>
    <variation>F</variation>
    <location>
        <position position="437"/>
    </location>
</feature>
<feature type="sequence conflict" description="In Ref. 1; AAA63452." evidence="2" ref="1">
    <original>W</original>
    <variation>L</variation>
    <location>
        <position position="489"/>
    </location>
</feature>
<name>PFPB_SOLTU</name>
<keyword id="KW-0021">Allosteric enzyme</keyword>
<keyword id="KW-0963">Cytoplasm</keyword>
<keyword id="KW-0903">Direct protein sequencing</keyword>
<keyword id="KW-0324">Glycolysis</keyword>
<keyword id="KW-0418">Kinase</keyword>
<keyword id="KW-0460">Magnesium</keyword>
<keyword id="KW-0479">Metal-binding</keyword>
<keyword id="KW-1185">Reference proteome</keyword>
<keyword id="KW-0808">Transferase</keyword>
<reference key="1">
    <citation type="journal article" date="1990" name="J. Biol. Chem.">
        <title>Pyrophosphate-dependent phosphofructokinase. Conservation of protein sequence between the alpha- and beta-subunits and with the ATP-dependent phosphofructokinase.</title>
        <authorList>
            <person name="Carlisle S.M."/>
            <person name="Blakeley S.D."/>
            <person name="Hemmingsen S.M."/>
            <person name="Trevanion S.J."/>
            <person name="Hiyoshi T."/>
            <person name="Kruger N.J."/>
            <person name="Dennis D.T."/>
        </authorList>
    </citation>
    <scope>NUCLEOTIDE SEQUENCE [MRNA]</scope>
    <scope>PROTEIN SEQUENCE OF 410-421</scope>
    <source>
        <strain>cv. Kennebec</strain>
    </source>
</reference>
<reference key="2">
    <citation type="journal article" date="1995" name="Gene">
        <title>Structure of the genes encoding the alpha- and beta-subunits of castor pyrophosphate-dependent phosphofructokinase.</title>
        <authorList>
            <person name="Todd J.F."/>
            <person name="Blakeley S.D."/>
            <person name="Dennis D.T."/>
        </authorList>
    </citation>
    <scope>SEQUENCE REVISION TO N-TERMINUS</scope>
    <scope>IDENTIFICATION OF FRAMESHIFTS</scope>
</reference>
<reference key="3">
    <citation type="journal article" date="2011" name="Nature">
        <title>Genome sequence and analysis of the tuber crop potato.</title>
        <authorList>
            <consortium name="The Potato Genome Sequencing Consortium"/>
        </authorList>
    </citation>
    <scope>NUCLEOTIDE SEQUENCE [LARGE SCALE GENOMIC DNA]</scope>
    <source>
        <strain>DM1-3 516 R44</strain>
    </source>
</reference>
<evidence type="ECO:0000255" key="1">
    <source>
        <dbReference type="HAMAP-Rule" id="MF_03185"/>
    </source>
</evidence>
<evidence type="ECO:0000305" key="2"/>
<sequence>MAAATLSLLNNGELASSVKSPGTGRYAAVYSEVQNSRLDHPLPLPSVLGSPFKVVDGPPSSAAGHPEEIAKLFPSLYGQPCVSLVPDDSGDVAMNQILKIGVVLSGGQAPGGHNVISGIFDYLQTHCKGSTMYGFRGGPAGVMKGKYVVLTPEFIYPYRNQGGFDMICSGRDKIETPEQFKQAEETAKKLDLDGLVVIGGDDSNTNACLLAENFRSKNLKTRVIGCPKTIDGDLKSKEVPTSFGFDTACKIYAEMIGNVMIDARSTGKYYHFVRLMGRAASHITLECALQTHPNVTLIGEEVFAKKLTLKNVTDYIADVVCKRAESGYNYGVILIPEGLIDFIPEVQQLIAELNEILAHDVVDEAGVWKKKLTPQCLELFELLPLAIQEQLLLERDPHGNVQVAKIETEKMLIQMVETELDQRKQKGAYNAQFKGQSHFFGYEGRCGLPSNFDSTYCYALGYGAGSLLQSGKTGLISSVGNLAAPVEEWTVGGTALTALMDVERRHGKFKPVIKKAMVELEGAPFKKFASKREEWALNNRYINPGPIQFVGPVANKVNHTLLLELGVDA</sequence>
<protein>
    <recommendedName>
        <fullName evidence="1">Pyrophosphate--fructose 6-phosphate 1-phosphotransferase subunit beta</fullName>
        <shortName evidence="1">PFP</shortName>
        <ecNumber evidence="1">2.7.1.90</ecNumber>
    </recommendedName>
    <alternativeName>
        <fullName evidence="1">6-phosphofructokinase, pyrophosphate dependent</fullName>
    </alternativeName>
    <alternativeName>
        <fullName evidence="1">PPi-PFK</fullName>
    </alternativeName>
    <alternativeName>
        <fullName evidence="1">Pyrophosphate-dependent 6-phosphofructose-1-kinase</fullName>
    </alternativeName>
</protein>
<dbReference type="EC" id="2.7.1.90" evidence="1"/>
<dbReference type="EMBL" id="M55191">
    <property type="protein sequence ID" value="AAA63452.1"/>
    <property type="status" value="ALT_FRAME"/>
    <property type="molecule type" value="mRNA"/>
</dbReference>
<dbReference type="PIR" id="B36094">
    <property type="entry name" value="B36094"/>
</dbReference>
<dbReference type="RefSeq" id="NP_001275324.1">
    <property type="nucleotide sequence ID" value="NM_001288395.1"/>
</dbReference>
<dbReference type="SMR" id="P21343"/>
<dbReference type="FunCoup" id="P21343">
    <property type="interactions" value="198"/>
</dbReference>
<dbReference type="STRING" id="4113.P21343"/>
<dbReference type="PaxDb" id="4113-PGSC0003DMT400043111"/>
<dbReference type="EnsemblPlants" id="PGSC0003DMT400043111">
    <property type="protein sequence ID" value="PGSC0003DMT400043111"/>
    <property type="gene ID" value="PGSC0003DMG400016726"/>
</dbReference>
<dbReference type="EnsemblPlants" id="RHC02H1G1959.2.1">
    <property type="protein sequence ID" value="RHC02H1G1959.2.1"/>
    <property type="gene ID" value="RHC02H1G1959.2"/>
</dbReference>
<dbReference type="EnsemblPlants" id="RHC02H1G1962.2.1">
    <property type="protein sequence ID" value="RHC02H1G1962.2.1"/>
    <property type="gene ID" value="RHC02H1G1962.2"/>
</dbReference>
<dbReference type="GeneID" id="102577862"/>
<dbReference type="Gramene" id="PGSC0003DMT400043111">
    <property type="protein sequence ID" value="PGSC0003DMT400043111"/>
    <property type="gene ID" value="PGSC0003DMG400016726"/>
</dbReference>
<dbReference type="Gramene" id="RHC02H1G1959.2.1">
    <property type="protein sequence ID" value="RHC02H1G1959.2.1"/>
    <property type="gene ID" value="RHC02H1G1959.2"/>
</dbReference>
<dbReference type="Gramene" id="RHC02H1G1962.2.1">
    <property type="protein sequence ID" value="RHC02H1G1962.2.1"/>
    <property type="gene ID" value="RHC02H1G1962.2"/>
</dbReference>
<dbReference type="KEGG" id="sot:102577862"/>
<dbReference type="eggNOG" id="KOG2440">
    <property type="taxonomic scope" value="Eukaryota"/>
</dbReference>
<dbReference type="HOGENOM" id="CLU_022288_0_1_1"/>
<dbReference type="InParanoid" id="P21343"/>
<dbReference type="OMA" id="SAKKYWH"/>
<dbReference type="OrthoDB" id="537915at2759"/>
<dbReference type="SABIO-RK" id="P21343"/>
<dbReference type="UniPathway" id="UPA00109">
    <property type="reaction ID" value="UER00182"/>
</dbReference>
<dbReference type="Proteomes" id="UP000011115">
    <property type="component" value="Unassembled WGS sequence"/>
</dbReference>
<dbReference type="GO" id="GO:0005737">
    <property type="term" value="C:cytoplasm"/>
    <property type="evidence" value="ECO:0007669"/>
    <property type="project" value="UniProtKB-SubCell"/>
</dbReference>
<dbReference type="GO" id="GO:0003872">
    <property type="term" value="F:6-phosphofructokinase activity"/>
    <property type="evidence" value="ECO:0007669"/>
    <property type="project" value="UniProtKB-UniRule"/>
</dbReference>
<dbReference type="GO" id="GO:0005524">
    <property type="term" value="F:ATP binding"/>
    <property type="evidence" value="ECO:0007669"/>
    <property type="project" value="InterPro"/>
</dbReference>
<dbReference type="GO" id="GO:0047334">
    <property type="term" value="F:diphosphate-fructose-6-phosphate 1-phosphotransferase activity"/>
    <property type="evidence" value="ECO:0000318"/>
    <property type="project" value="GO_Central"/>
</dbReference>
<dbReference type="GO" id="GO:0046872">
    <property type="term" value="F:metal ion binding"/>
    <property type="evidence" value="ECO:0007669"/>
    <property type="project" value="UniProtKB-KW"/>
</dbReference>
<dbReference type="GO" id="GO:0006002">
    <property type="term" value="P:fructose 6-phosphate metabolic process"/>
    <property type="evidence" value="ECO:0007669"/>
    <property type="project" value="InterPro"/>
</dbReference>
<dbReference type="GO" id="GO:0015979">
    <property type="term" value="P:photosynthesis"/>
    <property type="evidence" value="ECO:0000318"/>
    <property type="project" value="GO_Central"/>
</dbReference>
<dbReference type="GO" id="GO:0009749">
    <property type="term" value="P:response to glucose"/>
    <property type="evidence" value="ECO:0000318"/>
    <property type="project" value="GO_Central"/>
</dbReference>
<dbReference type="FunFam" id="1.10.10.480:FF:000002">
    <property type="entry name" value="Pyrophosphate--fructose 6-phosphate 1-phosphotransferase subunit beta"/>
    <property type="match status" value="1"/>
</dbReference>
<dbReference type="Gene3D" id="3.40.50.450">
    <property type="match status" value="1"/>
</dbReference>
<dbReference type="Gene3D" id="3.40.50.460">
    <property type="entry name" value="Phosphofructokinase domain"/>
    <property type="match status" value="1"/>
</dbReference>
<dbReference type="Gene3D" id="1.10.10.480">
    <property type="entry name" value="Phosphofructokinase, domain 3"/>
    <property type="match status" value="1"/>
</dbReference>
<dbReference type="HAMAP" id="MF_01980">
    <property type="entry name" value="Phosphofructokinase_II_Long"/>
    <property type="match status" value="1"/>
</dbReference>
<dbReference type="InterPro" id="IPR022953">
    <property type="entry name" value="ATP_PFK"/>
</dbReference>
<dbReference type="InterPro" id="IPR011183">
    <property type="entry name" value="PfpB_PPi_PFK"/>
</dbReference>
<dbReference type="InterPro" id="IPR000023">
    <property type="entry name" value="Phosphofructokinase_dom"/>
</dbReference>
<dbReference type="InterPro" id="IPR035966">
    <property type="entry name" value="PKF_sf"/>
</dbReference>
<dbReference type="NCBIfam" id="TIGR02477">
    <property type="entry name" value="PFKA_PPi"/>
    <property type="match status" value="1"/>
</dbReference>
<dbReference type="NCBIfam" id="NF005482">
    <property type="entry name" value="PRK07085.1"/>
    <property type="match status" value="1"/>
</dbReference>
<dbReference type="PANTHER" id="PTHR43650">
    <property type="entry name" value="PYROPHOSPHATE--FRUCTOSE 6-PHOSPHATE 1-PHOSPHOTRANSFERASE"/>
    <property type="match status" value="1"/>
</dbReference>
<dbReference type="PANTHER" id="PTHR43650:SF1">
    <property type="entry name" value="PYROPHOSPHATE--FRUCTOSE 6-PHOSPHATE 1-PHOSPHOTRANSFERASE SUBUNIT BETA 2"/>
    <property type="match status" value="1"/>
</dbReference>
<dbReference type="Pfam" id="PF00365">
    <property type="entry name" value="PFK"/>
    <property type="match status" value="1"/>
</dbReference>
<dbReference type="PIRSF" id="PIRSF005677">
    <property type="entry name" value="PPi_PFK_PfpB"/>
    <property type="match status" value="1"/>
</dbReference>
<dbReference type="PRINTS" id="PR00476">
    <property type="entry name" value="PHFRCTKINASE"/>
</dbReference>
<dbReference type="SUPFAM" id="SSF53784">
    <property type="entry name" value="Phosphofructokinase"/>
    <property type="match status" value="1"/>
</dbReference>
<organism>
    <name type="scientific">Solanum tuberosum</name>
    <name type="common">Potato</name>
    <dbReference type="NCBI Taxonomy" id="4113"/>
    <lineage>
        <taxon>Eukaryota</taxon>
        <taxon>Viridiplantae</taxon>
        <taxon>Streptophyta</taxon>
        <taxon>Embryophyta</taxon>
        <taxon>Tracheophyta</taxon>
        <taxon>Spermatophyta</taxon>
        <taxon>Magnoliopsida</taxon>
        <taxon>eudicotyledons</taxon>
        <taxon>Gunneridae</taxon>
        <taxon>Pentapetalae</taxon>
        <taxon>asterids</taxon>
        <taxon>lamiids</taxon>
        <taxon>Solanales</taxon>
        <taxon>Solanaceae</taxon>
        <taxon>Solanoideae</taxon>
        <taxon>Solaneae</taxon>
        <taxon>Solanum</taxon>
    </lineage>
</organism>